<reference key="1">
    <citation type="submission" date="1997-01" db="EMBL/GenBank/DDBJ databases">
        <title>Sequence of minutes 4-25 of Escherichia coli.</title>
        <authorList>
            <person name="Chung E."/>
            <person name="Allen E."/>
            <person name="Araujo R."/>
            <person name="Aparicio A.M."/>
            <person name="Davis K."/>
            <person name="Duncan M."/>
            <person name="Federspiel N."/>
            <person name="Hyman R."/>
            <person name="Kalman S."/>
            <person name="Komp C."/>
            <person name="Kurdi O."/>
            <person name="Lew H."/>
            <person name="Lin D."/>
            <person name="Namath A."/>
            <person name="Oefner P."/>
            <person name="Roberts D."/>
            <person name="Schramm S."/>
            <person name="Davis R.W."/>
        </authorList>
    </citation>
    <scope>NUCLEOTIDE SEQUENCE [LARGE SCALE GENOMIC DNA]</scope>
    <source>
        <strain>K12 / MG1655 / ATCC 47076</strain>
    </source>
</reference>
<reference key="2">
    <citation type="journal article" date="1997" name="Science">
        <title>The complete genome sequence of Escherichia coli K-12.</title>
        <authorList>
            <person name="Blattner F.R."/>
            <person name="Plunkett G. III"/>
            <person name="Bloch C.A."/>
            <person name="Perna N.T."/>
            <person name="Burland V."/>
            <person name="Riley M."/>
            <person name="Collado-Vides J."/>
            <person name="Glasner J.D."/>
            <person name="Rode C.K."/>
            <person name="Mayhew G.F."/>
            <person name="Gregor J."/>
            <person name="Davis N.W."/>
            <person name="Kirkpatrick H.A."/>
            <person name="Goeden M.A."/>
            <person name="Rose D.J."/>
            <person name="Mau B."/>
            <person name="Shao Y."/>
        </authorList>
    </citation>
    <scope>NUCLEOTIDE SEQUENCE [LARGE SCALE GENOMIC DNA]</scope>
    <source>
        <strain>K12 / MG1655 / ATCC 47076</strain>
    </source>
</reference>
<reference key="3">
    <citation type="journal article" date="2006" name="Mol. Syst. Biol.">
        <title>Highly accurate genome sequences of Escherichia coli K-12 strains MG1655 and W3110.</title>
        <authorList>
            <person name="Hayashi K."/>
            <person name="Morooka N."/>
            <person name="Yamamoto Y."/>
            <person name="Fujita K."/>
            <person name="Isono K."/>
            <person name="Choi S."/>
            <person name="Ohtsubo E."/>
            <person name="Baba T."/>
            <person name="Wanner B.L."/>
            <person name="Mori H."/>
            <person name="Horiuchi T."/>
        </authorList>
    </citation>
    <scope>NUCLEOTIDE SEQUENCE [LARGE SCALE GENOMIC DNA]</scope>
    <source>
        <strain>K12 / W3110 / ATCC 27325 / DSM 5911</strain>
    </source>
</reference>
<reference key="4">
    <citation type="journal article" date="2010" name="Environ. Microbiol.">
        <title>Escherichia coli K-12 possesses multiple cryptic but functional chaperone-usher fimbriae with distinct surface specificities.</title>
        <authorList>
            <person name="Korea C.G."/>
            <person name="Badouraly R."/>
            <person name="Prevost M.C."/>
            <person name="Ghigo J.M."/>
            <person name="Beloin C."/>
        </authorList>
    </citation>
    <scope>FUNCTION</scope>
    <scope>INDUCTION</scope>
    <scope>DISRUPTION PHENOTYPE</scope>
    <source>
        <strain>K12 / MG1655 / ATCC 47076</strain>
    </source>
</reference>
<feature type="signal peptide" evidence="2">
    <location>
        <begin position="1"/>
        <end position="24"/>
    </location>
</feature>
<feature type="chain" id="PRO_0000009212" description="Uncharacterized fimbrial-like protein SfmH">
    <location>
        <begin position="25"/>
        <end position="327"/>
    </location>
</feature>
<evidence type="ECO:0000250" key="1"/>
<evidence type="ECO:0000255" key="2"/>
<evidence type="ECO:0000269" key="3">
    <source>
    </source>
</evidence>
<evidence type="ECO:0000305" key="4"/>
<evidence type="ECO:0000305" key="5">
    <source>
    </source>
</evidence>
<keyword id="KW-0281">Fimbrium</keyword>
<keyword id="KW-0430">Lectin</keyword>
<keyword id="KW-0465">Mannose-binding</keyword>
<keyword id="KW-1185">Reference proteome</keyword>
<keyword id="KW-0732">Signal</keyword>
<name>SFMH_ECOLI</name>
<proteinExistence type="evidence at transcript level"/>
<accession>P75715</accession>
<accession>P77078</accession>
<accession>Q2MBP6</accession>
<sequence length="327" mass="35696">MAMACLCLANISWATVCANSTGVAEDEHYDLSNIFNSTNNQPGQIVVLPEKSGWVGVSAICPPGTLVNYTYRSYVTNFIVQETIDNYKYMQLHDYLLGAMSLVDSVMDIQFPPQNYIRMGTDPNVSQNLPFGVMDSRLIFRLKVIRPFINMVEIPRQVMFTVYVTSTPYDPLVTPVYTISFGGRVEVPQNCELNAGQIVEFDFGDIGASLFSAAGPGNRPAGVMPQTKSIAVKCTNVAAQAYLTMRLEASAVSGQAMVSDNQDLGFIVADQNDTPITPNDLNSVIPFRLDAAAAANVTLRAWPISITGQKPTEGPFSALGYLRVDYQ</sequence>
<dbReference type="EMBL" id="U82598">
    <property type="protein sequence ID" value="AAB40731.1"/>
    <property type="status" value="ALT_INIT"/>
    <property type="molecule type" value="Genomic_DNA"/>
</dbReference>
<dbReference type="EMBL" id="U00096">
    <property type="protein sequence ID" value="AAC73635.2"/>
    <property type="molecule type" value="Genomic_DNA"/>
</dbReference>
<dbReference type="EMBL" id="AP009048">
    <property type="protein sequence ID" value="BAE76310.1"/>
    <property type="status" value="ALT_INIT"/>
    <property type="molecule type" value="Genomic_DNA"/>
</dbReference>
<dbReference type="PIR" id="D64785">
    <property type="entry name" value="D64785"/>
</dbReference>
<dbReference type="RefSeq" id="NP_415066.2">
    <property type="nucleotide sequence ID" value="NC_000913.3"/>
</dbReference>
<dbReference type="SMR" id="P75715"/>
<dbReference type="BioGRID" id="4261686">
    <property type="interactions" value="4"/>
</dbReference>
<dbReference type="FunCoup" id="P75715">
    <property type="interactions" value="55"/>
</dbReference>
<dbReference type="STRING" id="511145.b0533"/>
<dbReference type="PaxDb" id="511145-b0533"/>
<dbReference type="EnsemblBacteria" id="AAC73635">
    <property type="protein sequence ID" value="AAC73635"/>
    <property type="gene ID" value="b0533"/>
</dbReference>
<dbReference type="GeneID" id="945407"/>
<dbReference type="KEGG" id="ecj:JW5071"/>
<dbReference type="KEGG" id="eco:b0533"/>
<dbReference type="PATRIC" id="fig|511145.12.peg.554"/>
<dbReference type="EchoBASE" id="EB3643"/>
<dbReference type="eggNOG" id="COG3539">
    <property type="taxonomic scope" value="Bacteria"/>
</dbReference>
<dbReference type="HOGENOM" id="CLU_066608_1_0_6"/>
<dbReference type="InParanoid" id="P75715"/>
<dbReference type="OMA" id="IKCTNVE"/>
<dbReference type="PhylomeDB" id="P75715"/>
<dbReference type="BioCyc" id="EcoCyc:G6293-MONOMER"/>
<dbReference type="PRO" id="PR:P75715"/>
<dbReference type="Proteomes" id="UP000000625">
    <property type="component" value="Chromosome"/>
</dbReference>
<dbReference type="GO" id="GO:0009289">
    <property type="term" value="C:pilus"/>
    <property type="evidence" value="ECO:0000318"/>
    <property type="project" value="GO_Central"/>
</dbReference>
<dbReference type="GO" id="GO:0005537">
    <property type="term" value="F:D-mannose binding"/>
    <property type="evidence" value="ECO:0007669"/>
    <property type="project" value="UniProtKB-KW"/>
</dbReference>
<dbReference type="GO" id="GO:0007155">
    <property type="term" value="P:cell adhesion"/>
    <property type="evidence" value="ECO:0000315"/>
    <property type="project" value="EcoCyc"/>
</dbReference>
<dbReference type="GO" id="GO:0043709">
    <property type="term" value="P:cell adhesion involved in single-species biofilm formation"/>
    <property type="evidence" value="ECO:0000318"/>
    <property type="project" value="GO_Central"/>
</dbReference>
<dbReference type="Gene3D" id="2.60.40.1090">
    <property type="entry name" value="Fimbrial-type adhesion domain"/>
    <property type="match status" value="1"/>
</dbReference>
<dbReference type="InterPro" id="IPR000259">
    <property type="entry name" value="Adhesion_dom_fimbrial"/>
</dbReference>
<dbReference type="InterPro" id="IPR036937">
    <property type="entry name" value="Adhesion_dom_fimbrial_sf"/>
</dbReference>
<dbReference type="InterPro" id="IPR008966">
    <property type="entry name" value="Adhesion_dom_sf"/>
</dbReference>
<dbReference type="InterPro" id="IPR050263">
    <property type="entry name" value="Bact_Fimbrial_Adh_Pro"/>
</dbReference>
<dbReference type="NCBIfam" id="NF011746">
    <property type="entry name" value="PRK15199.1"/>
    <property type="match status" value="1"/>
</dbReference>
<dbReference type="PANTHER" id="PTHR33420">
    <property type="entry name" value="FIMBRIAL SUBUNIT ELFA-RELATED"/>
    <property type="match status" value="1"/>
</dbReference>
<dbReference type="PANTHER" id="PTHR33420:SF31">
    <property type="entry name" value="TYPE 1 FIMBRIN D-MANNOSE SPECIFIC ADHESIN"/>
    <property type="match status" value="1"/>
</dbReference>
<dbReference type="Pfam" id="PF00419">
    <property type="entry name" value="Fimbrial"/>
    <property type="match status" value="1"/>
</dbReference>
<dbReference type="SUPFAM" id="SSF49401">
    <property type="entry name" value="Bacterial adhesins"/>
    <property type="match status" value="1"/>
</dbReference>
<comment type="function">
    <text evidence="3">Part of the sfmACDHF fimbrial operon. Could contribute to adhesion to various surfaces in specific environmental niches. Increases adhesion to eukaryotic T24 bladder epithelial cells in the absence of fim genes.</text>
</comment>
<comment type="subcellular location">
    <subcellularLocation>
        <location evidence="1">Fimbrium</location>
    </subcellularLocation>
</comment>
<comment type="induction">
    <text evidence="3">Expression is negatively regulated by H-NS and subjected to cAMP receptor protein (CRP)-mediated catabolite repression.</text>
</comment>
<comment type="disruption phenotype">
    <text evidence="3">Deletion of the operon under classical laboratory conditions does not result in any major effect on E.coli capacity to form biofilms compared with the wild-type strain.</text>
</comment>
<comment type="miscellaneous">
    <text evidence="5">The operon is cryptic under classical laboratory conditions, but is functional when constitutively expressed.</text>
</comment>
<comment type="similarity">
    <text evidence="4">Belongs to the fimbrial protein family.</text>
</comment>
<comment type="sequence caution" evidence="4">
    <conflict type="erroneous initiation">
        <sequence resource="EMBL-CDS" id="AAB40731"/>
    </conflict>
    <text>Extended N-terminus.</text>
</comment>
<comment type="sequence caution" evidence="4">
    <conflict type="erroneous initiation">
        <sequence resource="EMBL-CDS" id="BAE76310"/>
    </conflict>
    <text>Truncated N-terminus.</text>
</comment>
<gene>
    <name type="primary">sfmH</name>
    <name type="ordered locus">b0533</name>
    <name type="ordered locus">JW5071</name>
</gene>
<protein>
    <recommendedName>
        <fullName>Uncharacterized fimbrial-like protein SfmH</fullName>
    </recommendedName>
</protein>
<organism>
    <name type="scientific">Escherichia coli (strain K12)</name>
    <dbReference type="NCBI Taxonomy" id="83333"/>
    <lineage>
        <taxon>Bacteria</taxon>
        <taxon>Pseudomonadati</taxon>
        <taxon>Pseudomonadota</taxon>
        <taxon>Gammaproteobacteria</taxon>
        <taxon>Enterobacterales</taxon>
        <taxon>Enterobacteriaceae</taxon>
        <taxon>Escherichia</taxon>
    </lineage>
</organism>